<dbReference type="EC" id="2.5.1.16" evidence="1"/>
<dbReference type="EMBL" id="CP001396">
    <property type="protein sequence ID" value="ACR65570.1"/>
    <property type="molecule type" value="Genomic_DNA"/>
</dbReference>
<dbReference type="RefSeq" id="WP_000818411.1">
    <property type="nucleotide sequence ID" value="NC_012759.1"/>
</dbReference>
<dbReference type="SMR" id="C4ZRL4"/>
<dbReference type="GeneID" id="75202064"/>
<dbReference type="KEGG" id="ebw:BWG_0114"/>
<dbReference type="HOGENOM" id="CLU_048199_0_0_6"/>
<dbReference type="UniPathway" id="UPA00248">
    <property type="reaction ID" value="UER00314"/>
</dbReference>
<dbReference type="GO" id="GO:0005829">
    <property type="term" value="C:cytosol"/>
    <property type="evidence" value="ECO:0007669"/>
    <property type="project" value="TreeGrafter"/>
</dbReference>
<dbReference type="GO" id="GO:0004766">
    <property type="term" value="F:spermidine synthase activity"/>
    <property type="evidence" value="ECO:0007669"/>
    <property type="project" value="UniProtKB-UniRule"/>
</dbReference>
<dbReference type="GO" id="GO:0008295">
    <property type="term" value="P:spermidine biosynthetic process"/>
    <property type="evidence" value="ECO:0007669"/>
    <property type="project" value="UniProtKB-UniRule"/>
</dbReference>
<dbReference type="CDD" id="cd02440">
    <property type="entry name" value="AdoMet_MTases"/>
    <property type="match status" value="1"/>
</dbReference>
<dbReference type="FunFam" id="2.30.140.10:FF:000002">
    <property type="entry name" value="Polyamine aminopropyltransferase"/>
    <property type="match status" value="1"/>
</dbReference>
<dbReference type="FunFam" id="3.40.50.150:FF:000026">
    <property type="entry name" value="Polyamine aminopropyltransferase"/>
    <property type="match status" value="1"/>
</dbReference>
<dbReference type="Gene3D" id="2.30.140.10">
    <property type="entry name" value="Spermidine synthase, tetramerisation domain"/>
    <property type="match status" value="1"/>
</dbReference>
<dbReference type="Gene3D" id="3.40.50.150">
    <property type="entry name" value="Vaccinia Virus protein VP39"/>
    <property type="match status" value="1"/>
</dbReference>
<dbReference type="HAMAP" id="MF_00198">
    <property type="entry name" value="Spermidine_synth"/>
    <property type="match status" value="1"/>
</dbReference>
<dbReference type="InterPro" id="IPR030374">
    <property type="entry name" value="PABS"/>
</dbReference>
<dbReference type="InterPro" id="IPR030373">
    <property type="entry name" value="PABS_CS"/>
</dbReference>
<dbReference type="InterPro" id="IPR029063">
    <property type="entry name" value="SAM-dependent_MTases_sf"/>
</dbReference>
<dbReference type="InterPro" id="IPR001045">
    <property type="entry name" value="Spermi_synthase"/>
</dbReference>
<dbReference type="InterPro" id="IPR035246">
    <property type="entry name" value="Spermidine_synt_N"/>
</dbReference>
<dbReference type="InterPro" id="IPR037163">
    <property type="entry name" value="Spermidine_synt_N_sf"/>
</dbReference>
<dbReference type="NCBIfam" id="NF037959">
    <property type="entry name" value="MFS_SpdSyn"/>
    <property type="match status" value="1"/>
</dbReference>
<dbReference type="NCBIfam" id="NF002010">
    <property type="entry name" value="PRK00811.1"/>
    <property type="match status" value="1"/>
</dbReference>
<dbReference type="NCBIfam" id="TIGR00417">
    <property type="entry name" value="speE"/>
    <property type="match status" value="1"/>
</dbReference>
<dbReference type="PANTHER" id="PTHR11558:SF11">
    <property type="entry name" value="SPERMIDINE SYNTHASE"/>
    <property type="match status" value="1"/>
</dbReference>
<dbReference type="PANTHER" id="PTHR11558">
    <property type="entry name" value="SPERMIDINE/SPERMINE SYNTHASE"/>
    <property type="match status" value="1"/>
</dbReference>
<dbReference type="Pfam" id="PF17284">
    <property type="entry name" value="Spermine_synt_N"/>
    <property type="match status" value="1"/>
</dbReference>
<dbReference type="Pfam" id="PF01564">
    <property type="entry name" value="Spermine_synth"/>
    <property type="match status" value="1"/>
</dbReference>
<dbReference type="SUPFAM" id="SSF53335">
    <property type="entry name" value="S-adenosyl-L-methionine-dependent methyltransferases"/>
    <property type="match status" value="1"/>
</dbReference>
<dbReference type="PROSITE" id="PS01330">
    <property type="entry name" value="PABS_1"/>
    <property type="match status" value="1"/>
</dbReference>
<dbReference type="PROSITE" id="PS51006">
    <property type="entry name" value="PABS_2"/>
    <property type="match status" value="1"/>
</dbReference>
<feature type="chain" id="PRO_1000204072" description="Polyamine aminopropyltransferase">
    <location>
        <begin position="1"/>
        <end position="288"/>
    </location>
</feature>
<feature type="domain" description="PABS" evidence="1">
    <location>
        <begin position="9"/>
        <end position="238"/>
    </location>
</feature>
<feature type="active site" description="Proton acceptor" evidence="1">
    <location>
        <position position="158"/>
    </location>
</feature>
<feature type="binding site" evidence="1">
    <location>
        <position position="33"/>
    </location>
    <ligand>
        <name>S-methyl-5'-thioadenosine</name>
        <dbReference type="ChEBI" id="CHEBI:17509"/>
    </ligand>
</feature>
<feature type="binding site" evidence="1">
    <location>
        <position position="64"/>
    </location>
    <ligand>
        <name>spermidine</name>
        <dbReference type="ChEBI" id="CHEBI:57834"/>
    </ligand>
</feature>
<feature type="binding site" evidence="1">
    <location>
        <position position="88"/>
    </location>
    <ligand>
        <name>spermidine</name>
        <dbReference type="ChEBI" id="CHEBI:57834"/>
    </ligand>
</feature>
<feature type="binding site" evidence="1">
    <location>
        <position position="108"/>
    </location>
    <ligand>
        <name>S-methyl-5'-thioadenosine</name>
        <dbReference type="ChEBI" id="CHEBI:17509"/>
    </ligand>
</feature>
<feature type="binding site" evidence="1">
    <location>
        <begin position="140"/>
        <end position="141"/>
    </location>
    <ligand>
        <name>S-methyl-5'-thioadenosine</name>
        <dbReference type="ChEBI" id="CHEBI:17509"/>
    </ligand>
</feature>
<feature type="binding site" evidence="1">
    <location>
        <begin position="158"/>
        <end position="161"/>
    </location>
    <ligand>
        <name>spermidine</name>
        <dbReference type="ChEBI" id="CHEBI:57834"/>
    </ligand>
</feature>
<feature type="binding site" evidence="1">
    <location>
        <position position="165"/>
    </location>
    <ligand>
        <name>S-methyl-5'-thioadenosine</name>
        <dbReference type="ChEBI" id="CHEBI:17509"/>
    </ligand>
</feature>
<name>SPEE_ECOBW</name>
<proteinExistence type="inferred from homology"/>
<gene>
    <name evidence="1" type="primary">speE</name>
    <name type="ordered locus">BWG_0114</name>
</gene>
<keyword id="KW-0963">Cytoplasm</keyword>
<keyword id="KW-0620">Polyamine biosynthesis</keyword>
<keyword id="KW-0745">Spermidine biosynthesis</keyword>
<keyword id="KW-0808">Transferase</keyword>
<evidence type="ECO:0000255" key="1">
    <source>
        <dbReference type="HAMAP-Rule" id="MF_00198"/>
    </source>
</evidence>
<accession>C4ZRL4</accession>
<organism>
    <name type="scientific">Escherichia coli (strain K12 / MC4100 / BW2952)</name>
    <dbReference type="NCBI Taxonomy" id="595496"/>
    <lineage>
        <taxon>Bacteria</taxon>
        <taxon>Pseudomonadati</taxon>
        <taxon>Pseudomonadota</taxon>
        <taxon>Gammaproteobacteria</taxon>
        <taxon>Enterobacterales</taxon>
        <taxon>Enterobacteriaceae</taxon>
        <taxon>Escherichia</taxon>
    </lineage>
</organism>
<sequence>MAEKKQWHETLHDQFGQYFAVDNVLYHEKTDHQDLIIFENAAFGRVMALDGVVQTTERDEFIYHEMMTHVPLLAHGHAKHVLIIGGGDGAMLREVTRHKNVESITMVEIDAGVVSFCRQYLPNHNAGSYDDPRFKLVIDDGVNFVNQTSQTFDVIISDCTDPIGPGESLFTSAFYEGCKRCLNPGGIFVAQNGVCFLQQEEAIDSHRKLSHYFSDVGFYQAAIPTYYGGIMTFAWATDNDALRHLSTEIIQARFLASGLKCRYYNPAIHTAAFALPQYLQDALASQPS</sequence>
<comment type="function">
    <text evidence="1">Catalyzes the irreversible transfer of a propylamine group from the amino donor S-adenosylmethioninamine (decarboxy-AdoMet) to putrescine (1,4-diaminobutane) to yield spermidine.</text>
</comment>
<comment type="catalytic activity">
    <reaction evidence="1">
        <text>S-adenosyl 3-(methylsulfanyl)propylamine + putrescine = S-methyl-5'-thioadenosine + spermidine + H(+)</text>
        <dbReference type="Rhea" id="RHEA:12721"/>
        <dbReference type="ChEBI" id="CHEBI:15378"/>
        <dbReference type="ChEBI" id="CHEBI:17509"/>
        <dbReference type="ChEBI" id="CHEBI:57443"/>
        <dbReference type="ChEBI" id="CHEBI:57834"/>
        <dbReference type="ChEBI" id="CHEBI:326268"/>
        <dbReference type="EC" id="2.5.1.16"/>
    </reaction>
</comment>
<comment type="pathway">
    <text evidence="1">Amine and polyamine biosynthesis; spermidine biosynthesis; spermidine from putrescine: step 1/1.</text>
</comment>
<comment type="subunit">
    <text evidence="1">Homodimer or homotetramer.</text>
</comment>
<comment type="subcellular location">
    <subcellularLocation>
        <location evidence="1">Cytoplasm</location>
    </subcellularLocation>
</comment>
<comment type="similarity">
    <text evidence="1">Belongs to the spermidine/spermine synthase family.</text>
</comment>
<reference key="1">
    <citation type="journal article" date="2009" name="J. Bacteriol.">
        <title>Genomic sequencing reveals regulatory mutations and recombinational events in the widely used MC4100 lineage of Escherichia coli K-12.</title>
        <authorList>
            <person name="Ferenci T."/>
            <person name="Zhou Z."/>
            <person name="Betteridge T."/>
            <person name="Ren Y."/>
            <person name="Liu Y."/>
            <person name="Feng L."/>
            <person name="Reeves P.R."/>
            <person name="Wang L."/>
        </authorList>
    </citation>
    <scope>NUCLEOTIDE SEQUENCE [LARGE SCALE GENOMIC DNA]</scope>
    <source>
        <strain>K12 / MC4100 / BW2952</strain>
    </source>
</reference>
<protein>
    <recommendedName>
        <fullName evidence="1">Polyamine aminopropyltransferase</fullName>
    </recommendedName>
    <alternativeName>
        <fullName evidence="1">Putrescine aminopropyltransferase</fullName>
        <shortName evidence="1">PAPT</shortName>
    </alternativeName>
    <alternativeName>
        <fullName evidence="1">Spermidine synthase</fullName>
        <shortName evidence="1">SPDS</shortName>
        <shortName evidence="1">SPDSY</shortName>
        <ecNumber evidence="1">2.5.1.16</ecNumber>
    </alternativeName>
</protein>